<name>CHEC_THEMA</name>
<keyword id="KW-0002">3D-structure</keyword>
<keyword id="KW-0145">Chemotaxis</keyword>
<keyword id="KW-0378">Hydrolase</keyword>
<keyword id="KW-1185">Reference proteome</keyword>
<dbReference type="EC" id="3.-.-.-"/>
<dbReference type="EMBL" id="AE000512">
    <property type="protein sequence ID" value="AAD35985.1"/>
    <property type="molecule type" value="Genomic_DNA"/>
</dbReference>
<dbReference type="PIR" id="G72318">
    <property type="entry name" value="G72318"/>
</dbReference>
<dbReference type="RefSeq" id="NP_228712.1">
    <property type="nucleotide sequence ID" value="NC_000853.1"/>
</dbReference>
<dbReference type="RefSeq" id="WP_004080665.1">
    <property type="nucleotide sequence ID" value="NC_000853.1"/>
</dbReference>
<dbReference type="PDB" id="1XKR">
    <property type="method" value="X-ray"/>
    <property type="resolution" value="1.75 A"/>
    <property type="chains" value="A=1-205"/>
</dbReference>
<dbReference type="PDB" id="2F9Z">
    <property type="method" value="X-ray"/>
    <property type="resolution" value="2.40 A"/>
    <property type="chains" value="A/B=1-205"/>
</dbReference>
<dbReference type="PDBsum" id="1XKR"/>
<dbReference type="PDBsum" id="2F9Z"/>
<dbReference type="SMR" id="Q9X006"/>
<dbReference type="FunCoup" id="Q9X006">
    <property type="interactions" value="34"/>
</dbReference>
<dbReference type="STRING" id="243274.TM_0904"/>
<dbReference type="PaxDb" id="243274-THEMA_00115"/>
<dbReference type="EnsemblBacteria" id="AAD35985">
    <property type="protein sequence ID" value="AAD35985"/>
    <property type="gene ID" value="TM_0904"/>
</dbReference>
<dbReference type="KEGG" id="tma:TM0904"/>
<dbReference type="KEGG" id="tmi:THEMA_00115"/>
<dbReference type="KEGG" id="tmm:Tmari_0906"/>
<dbReference type="KEGG" id="tmw:THMA_0926"/>
<dbReference type="eggNOG" id="COG1776">
    <property type="taxonomic scope" value="Bacteria"/>
</dbReference>
<dbReference type="InParanoid" id="Q9X006"/>
<dbReference type="OrthoDB" id="9812187at2"/>
<dbReference type="EvolutionaryTrace" id="Q9X006"/>
<dbReference type="Proteomes" id="UP000008183">
    <property type="component" value="Chromosome"/>
</dbReference>
<dbReference type="GO" id="GO:0016787">
    <property type="term" value="F:hydrolase activity"/>
    <property type="evidence" value="ECO:0007669"/>
    <property type="project" value="UniProtKB-KW"/>
</dbReference>
<dbReference type="GO" id="GO:0006935">
    <property type="term" value="P:chemotaxis"/>
    <property type="evidence" value="ECO:0007669"/>
    <property type="project" value="UniProtKB-KW"/>
</dbReference>
<dbReference type="CDD" id="cd17909">
    <property type="entry name" value="CheC_ClassI"/>
    <property type="match status" value="1"/>
</dbReference>
<dbReference type="Gene3D" id="3.40.1550.10">
    <property type="entry name" value="CheC-like"/>
    <property type="match status" value="1"/>
</dbReference>
<dbReference type="InterPro" id="IPR007597">
    <property type="entry name" value="CheC"/>
</dbReference>
<dbReference type="InterPro" id="IPR028976">
    <property type="entry name" value="CheC-like_sf"/>
</dbReference>
<dbReference type="InterPro" id="IPR053645">
    <property type="entry name" value="CheY-P_phosphatase_CheC"/>
</dbReference>
<dbReference type="InterPro" id="IPR050992">
    <property type="entry name" value="CheZ_family_phosphatases"/>
</dbReference>
<dbReference type="NCBIfam" id="NF041093">
    <property type="entry name" value="CheC_Thtogales"/>
    <property type="match status" value="1"/>
</dbReference>
<dbReference type="PANTHER" id="PTHR43693">
    <property type="entry name" value="PROTEIN PHOSPHATASE CHEZ"/>
    <property type="match status" value="1"/>
</dbReference>
<dbReference type="PANTHER" id="PTHR43693:SF1">
    <property type="entry name" value="PROTEIN PHOSPHATASE CHEZ"/>
    <property type="match status" value="1"/>
</dbReference>
<dbReference type="Pfam" id="PF04509">
    <property type="entry name" value="CheC"/>
    <property type="match status" value="2"/>
</dbReference>
<dbReference type="SUPFAM" id="SSF103039">
    <property type="entry name" value="CheC-like"/>
    <property type="match status" value="1"/>
</dbReference>
<accession>Q9X006</accession>
<sequence>MKISERQKDLLKEIGNIGAGNAATAISYMINKKVEISVPNVEIVPISKVIFIAKDPEEIVVGVKMPVTGDIEGSVLLIMGTTVVKKILEILTGRAPDNLLNLDEFSASALREIGNIMCGTYVSALADFLGFKIDTLPPQLVIDMISAIFAEASIEELEDNSEDQIVFVETLLKVEEEEEPLTSYMMMIPKPGYLVKIFERMGIQE</sequence>
<evidence type="ECO:0000269" key="1">
    <source>
    </source>
</evidence>
<evidence type="ECO:0000269" key="2">
    <source>
    </source>
</evidence>
<evidence type="ECO:0000305" key="3"/>
<evidence type="ECO:0007829" key="4">
    <source>
        <dbReference type="PDB" id="1XKR"/>
    </source>
</evidence>
<protein>
    <recommendedName>
        <fullName>CheY-P phosphatase CheC</fullName>
        <ecNumber>3.-.-.-</ecNumber>
    </recommendedName>
</protein>
<comment type="function">
    <text>Involved in restoring normal CheY-P levels by dephosphorylating CheY-P. Inhibits CheD by incorporating in its fold a structural motif that mimics a CheD substrate recognition site to bait and inactivate it.</text>
</comment>
<comment type="subunit">
    <text evidence="2">Heterodimer with CheD. The CheC-CheD heterodimer interacts with phosphorylated CheY. The CheC-CheD dimer has higher phosphatase activity than CheC alone.</text>
</comment>
<comment type="similarity">
    <text evidence="3">Belongs to the CheC family.</text>
</comment>
<reference key="1">
    <citation type="journal article" date="1999" name="Nature">
        <title>Evidence for lateral gene transfer between Archaea and Bacteria from genome sequence of Thermotoga maritima.</title>
        <authorList>
            <person name="Nelson K.E."/>
            <person name="Clayton R.A."/>
            <person name="Gill S.R."/>
            <person name="Gwinn M.L."/>
            <person name="Dodson R.J."/>
            <person name="Haft D.H."/>
            <person name="Hickey E.K."/>
            <person name="Peterson J.D."/>
            <person name="Nelson W.C."/>
            <person name="Ketchum K.A."/>
            <person name="McDonald L.A."/>
            <person name="Utterback T.R."/>
            <person name="Malek J.A."/>
            <person name="Linher K.D."/>
            <person name="Garrett M.M."/>
            <person name="Stewart A.M."/>
            <person name="Cotton M.D."/>
            <person name="Pratt M.S."/>
            <person name="Phillips C.A."/>
            <person name="Richardson D.L."/>
            <person name="Heidelberg J.F."/>
            <person name="Sutton G.G."/>
            <person name="Fleischmann R.D."/>
            <person name="Eisen J.A."/>
            <person name="White O."/>
            <person name="Salzberg S.L."/>
            <person name="Smith H.O."/>
            <person name="Venter J.C."/>
            <person name="Fraser C.M."/>
        </authorList>
    </citation>
    <scope>NUCLEOTIDE SEQUENCE [LARGE SCALE GENOMIC DNA]</scope>
    <source>
        <strain>ATCC 43589 / DSM 3109 / JCM 10099 / NBRC 100826 / MSB8</strain>
    </source>
</reference>
<reference key="2">
    <citation type="journal article" date="2004" name="Mol. Cell">
        <title>Structure and function of an unusual family of protein phosphatases: the bacterial chemotaxis proteins CheC and CheX.</title>
        <authorList>
            <person name="Park S.-Y."/>
            <person name="Chao X."/>
            <person name="Gonzalez-Bonet G."/>
            <person name="Beel B.D."/>
            <person name="Bilwes A.M."/>
            <person name="Crane B.R."/>
        </authorList>
    </citation>
    <scope>X-RAY CRYSTALLOGRAPHY (1.75 ANGSTROMS)</scope>
    <scope>MUTAGENESIS OF GLU-13; ASN-16; GLU-112 AND ASN-115</scope>
</reference>
<reference key="3">
    <citation type="journal article" date="2006" name="Cell">
        <title>A receptor-modifying deamidase in complex with a signaling phosphatase reveals reciprocal regulation.</title>
        <authorList>
            <person name="Chao X."/>
            <person name="Muff T.J."/>
            <person name="Park S.-Y."/>
            <person name="Zhang S."/>
            <person name="Pollard A.M."/>
            <person name="Ordal G.W."/>
            <person name="Bilwes A.M."/>
            <person name="Crane B.R."/>
        </authorList>
    </citation>
    <scope>X-RAY CRYSTALLOGRAPHY (2.5 ANGSTROMS) IN COMPLEX WITH CHED</scope>
</reference>
<organism>
    <name type="scientific">Thermotoga maritima (strain ATCC 43589 / DSM 3109 / JCM 10099 / NBRC 100826 / MSB8)</name>
    <dbReference type="NCBI Taxonomy" id="243274"/>
    <lineage>
        <taxon>Bacteria</taxon>
        <taxon>Thermotogati</taxon>
        <taxon>Thermotogota</taxon>
        <taxon>Thermotogae</taxon>
        <taxon>Thermotogales</taxon>
        <taxon>Thermotogaceae</taxon>
        <taxon>Thermotoga</taxon>
    </lineage>
</organism>
<feature type="chain" id="PRO_0000250997" description="CheY-P phosphatase CheC">
    <location>
        <begin position="1"/>
        <end position="205"/>
    </location>
</feature>
<feature type="mutagenesis site" description="Loss of activity, in absence of CheD; in presence of CheD, activity greater than wild-type CheC alone. Loss of activity, in absence of CheD; when associated with S-112. In presence of CheD, reduced activity but exceeds activity of CheC alone; when associated with S-112." evidence="1">
    <original>E</original>
    <variation>S</variation>
    <location>
        <position position="13"/>
    </location>
</feature>
<feature type="mutagenesis site" description="Loss of activity, in absence of CheD; in presence of CheD, activity greater than wild-type CheC alone. Loss of activity, in absence of CheD; when associated with S-115. In presence of CheD, almost no activity; when associated with S-115." evidence="1">
    <original>N</original>
    <variation>S</variation>
    <location>
        <position position="16"/>
    </location>
</feature>
<feature type="mutagenesis site" description="Loss of activity, in absence of CheD; in presence of CheD, activity greater than wild-type CheC alone. Loss of activity, in absence of CheD; when associated with S-13. In presence of CheD, reduced activity but exceeds activity of CheC alone; when associated with S-13." evidence="1">
    <original>E</original>
    <variation>S</variation>
    <location>
        <position position="112"/>
    </location>
</feature>
<feature type="mutagenesis site" description="Loss of activity, in absence of CheD; in presence of CheD, reduced activity. Loss of activity, in absence of CheD; when associated with S-16. In presence of CheD, almost no activity; when associated with S-16." evidence="1">
    <original>N</original>
    <variation>S</variation>
    <location>
        <position position="115"/>
    </location>
</feature>
<feature type="helix" evidence="4">
    <location>
        <begin position="5"/>
        <end position="30"/>
    </location>
</feature>
<feature type="strand" evidence="4">
    <location>
        <begin position="34"/>
        <end position="37"/>
    </location>
</feature>
<feature type="strand" evidence="4">
    <location>
        <begin position="41"/>
        <end position="45"/>
    </location>
</feature>
<feature type="helix" evidence="4">
    <location>
        <begin position="46"/>
        <end position="52"/>
    </location>
</feature>
<feature type="strand" evidence="4">
    <location>
        <begin position="59"/>
        <end position="71"/>
    </location>
</feature>
<feature type="strand" evidence="4">
    <location>
        <begin position="73"/>
        <end position="79"/>
    </location>
</feature>
<feature type="helix" evidence="4">
    <location>
        <begin position="81"/>
        <end position="92"/>
    </location>
</feature>
<feature type="helix" evidence="4">
    <location>
        <begin position="104"/>
        <end position="129"/>
    </location>
</feature>
<feature type="strand" evidence="4">
    <location>
        <begin position="133"/>
        <end position="135"/>
    </location>
</feature>
<feature type="strand" evidence="4">
    <location>
        <begin position="139"/>
        <end position="144"/>
    </location>
</feature>
<feature type="helix" evidence="4">
    <location>
        <begin position="145"/>
        <end position="157"/>
    </location>
</feature>
<feature type="strand" evidence="4">
    <location>
        <begin position="164"/>
        <end position="174"/>
    </location>
</feature>
<feature type="strand" evidence="4">
    <location>
        <begin position="177"/>
        <end position="179"/>
    </location>
</feature>
<feature type="strand" evidence="4">
    <location>
        <begin position="181"/>
        <end position="189"/>
    </location>
</feature>
<feature type="helix" evidence="4">
    <location>
        <begin position="193"/>
        <end position="199"/>
    </location>
</feature>
<gene>
    <name type="primary">cheC</name>
    <name type="ordered locus">TM_0904</name>
</gene>
<proteinExistence type="evidence at protein level"/>